<protein>
    <recommendedName>
        <fullName evidence="1">Serine hydroxymethyltransferase</fullName>
        <shortName evidence="1">SHMT</shortName>
        <shortName evidence="1">Serine methylase</shortName>
        <ecNumber evidence="1">2.1.2.1</ecNumber>
    </recommendedName>
</protein>
<comment type="function">
    <text evidence="1">Catalyzes the reversible interconversion of serine and glycine with tetrahydrofolate (THF) serving as the one-carbon carrier. This reaction serves as the major source of one-carbon groups required for the biosynthesis of purines, thymidylate, methionine, and other important biomolecules. Also exhibits THF-independent aldolase activity toward beta-hydroxyamino acids, producing glycine and aldehydes, via a retro-aldol mechanism.</text>
</comment>
<comment type="catalytic activity">
    <reaction evidence="1">
        <text>(6R)-5,10-methylene-5,6,7,8-tetrahydrofolate + glycine + H2O = (6S)-5,6,7,8-tetrahydrofolate + L-serine</text>
        <dbReference type="Rhea" id="RHEA:15481"/>
        <dbReference type="ChEBI" id="CHEBI:15377"/>
        <dbReference type="ChEBI" id="CHEBI:15636"/>
        <dbReference type="ChEBI" id="CHEBI:33384"/>
        <dbReference type="ChEBI" id="CHEBI:57305"/>
        <dbReference type="ChEBI" id="CHEBI:57453"/>
        <dbReference type="EC" id="2.1.2.1"/>
    </reaction>
</comment>
<comment type="cofactor">
    <cofactor evidence="1">
        <name>pyridoxal 5'-phosphate</name>
        <dbReference type="ChEBI" id="CHEBI:597326"/>
    </cofactor>
</comment>
<comment type="pathway">
    <text evidence="1">One-carbon metabolism; tetrahydrofolate interconversion.</text>
</comment>
<comment type="pathway">
    <text evidence="1">Amino-acid biosynthesis; glycine biosynthesis; glycine from L-serine: step 1/1.</text>
</comment>
<comment type="subunit">
    <text evidence="1">Homodimer.</text>
</comment>
<comment type="subcellular location">
    <subcellularLocation>
        <location evidence="1">Cytoplasm</location>
    </subcellularLocation>
</comment>
<comment type="similarity">
    <text evidence="1">Belongs to the SHMT family.</text>
</comment>
<reference key="1">
    <citation type="journal article" date="2003" name="Proc. Natl. Acad. Sci. U.S.A.">
        <title>The complete genome sequence of the carcinogenic bacterium Helicobacter hepaticus.</title>
        <authorList>
            <person name="Suerbaum S."/>
            <person name="Josenhans C."/>
            <person name="Sterzenbach T."/>
            <person name="Drescher B."/>
            <person name="Brandt P."/>
            <person name="Bell M."/>
            <person name="Droege M."/>
            <person name="Fartmann B."/>
            <person name="Fischer H.-P."/>
            <person name="Ge Z."/>
            <person name="Hoerster A."/>
            <person name="Holland R."/>
            <person name="Klein K."/>
            <person name="Koenig J."/>
            <person name="Macko L."/>
            <person name="Mendz G.L."/>
            <person name="Nyakatura G."/>
            <person name="Schauer D.B."/>
            <person name="Shen Z."/>
            <person name="Weber J."/>
            <person name="Frosch M."/>
            <person name="Fox J.G."/>
        </authorList>
    </citation>
    <scope>NUCLEOTIDE SEQUENCE [LARGE SCALE GENOMIC DNA]</scope>
    <source>
        <strain>ATCC 51449 / 3B1</strain>
    </source>
</reference>
<name>GLYA_HELHP</name>
<proteinExistence type="inferred from homology"/>
<accession>Q7VFL1</accession>
<dbReference type="EC" id="2.1.2.1" evidence="1"/>
<dbReference type="EMBL" id="AE017125">
    <property type="protein sequence ID" value="AAP78262.1"/>
    <property type="molecule type" value="Genomic_DNA"/>
</dbReference>
<dbReference type="RefSeq" id="WP_011116504.1">
    <property type="nucleotide sequence ID" value="NC_004917.1"/>
</dbReference>
<dbReference type="SMR" id="Q7VFL1"/>
<dbReference type="STRING" id="235279.HH_1665"/>
<dbReference type="KEGG" id="hhe:HH_1665"/>
<dbReference type="eggNOG" id="COG0112">
    <property type="taxonomic scope" value="Bacteria"/>
</dbReference>
<dbReference type="HOGENOM" id="CLU_022477_2_1_7"/>
<dbReference type="OrthoDB" id="9803846at2"/>
<dbReference type="UniPathway" id="UPA00193"/>
<dbReference type="UniPathway" id="UPA00288">
    <property type="reaction ID" value="UER01023"/>
</dbReference>
<dbReference type="Proteomes" id="UP000002495">
    <property type="component" value="Chromosome"/>
</dbReference>
<dbReference type="GO" id="GO:0005829">
    <property type="term" value="C:cytosol"/>
    <property type="evidence" value="ECO:0007669"/>
    <property type="project" value="TreeGrafter"/>
</dbReference>
<dbReference type="GO" id="GO:0004372">
    <property type="term" value="F:glycine hydroxymethyltransferase activity"/>
    <property type="evidence" value="ECO:0007669"/>
    <property type="project" value="UniProtKB-UniRule"/>
</dbReference>
<dbReference type="GO" id="GO:0030170">
    <property type="term" value="F:pyridoxal phosphate binding"/>
    <property type="evidence" value="ECO:0007669"/>
    <property type="project" value="UniProtKB-UniRule"/>
</dbReference>
<dbReference type="GO" id="GO:0019264">
    <property type="term" value="P:glycine biosynthetic process from serine"/>
    <property type="evidence" value="ECO:0007669"/>
    <property type="project" value="UniProtKB-UniRule"/>
</dbReference>
<dbReference type="GO" id="GO:0035999">
    <property type="term" value="P:tetrahydrofolate interconversion"/>
    <property type="evidence" value="ECO:0007669"/>
    <property type="project" value="UniProtKB-UniRule"/>
</dbReference>
<dbReference type="CDD" id="cd00378">
    <property type="entry name" value="SHMT"/>
    <property type="match status" value="1"/>
</dbReference>
<dbReference type="FunFam" id="3.40.640.10:FF:000001">
    <property type="entry name" value="Serine hydroxymethyltransferase"/>
    <property type="match status" value="1"/>
</dbReference>
<dbReference type="Gene3D" id="3.90.1150.10">
    <property type="entry name" value="Aspartate Aminotransferase, domain 1"/>
    <property type="match status" value="1"/>
</dbReference>
<dbReference type="Gene3D" id="3.40.640.10">
    <property type="entry name" value="Type I PLP-dependent aspartate aminotransferase-like (Major domain)"/>
    <property type="match status" value="1"/>
</dbReference>
<dbReference type="HAMAP" id="MF_00051">
    <property type="entry name" value="SHMT"/>
    <property type="match status" value="1"/>
</dbReference>
<dbReference type="InterPro" id="IPR015424">
    <property type="entry name" value="PyrdxlP-dep_Trfase"/>
</dbReference>
<dbReference type="InterPro" id="IPR015421">
    <property type="entry name" value="PyrdxlP-dep_Trfase_major"/>
</dbReference>
<dbReference type="InterPro" id="IPR015422">
    <property type="entry name" value="PyrdxlP-dep_Trfase_small"/>
</dbReference>
<dbReference type="InterPro" id="IPR001085">
    <property type="entry name" value="Ser_HO-MeTrfase"/>
</dbReference>
<dbReference type="InterPro" id="IPR049943">
    <property type="entry name" value="Ser_HO-MeTrfase-like"/>
</dbReference>
<dbReference type="InterPro" id="IPR019798">
    <property type="entry name" value="Ser_HO-MeTrfase_PLP_BS"/>
</dbReference>
<dbReference type="InterPro" id="IPR039429">
    <property type="entry name" value="SHMT-like_dom"/>
</dbReference>
<dbReference type="NCBIfam" id="NF000586">
    <property type="entry name" value="PRK00011.1"/>
    <property type="match status" value="1"/>
</dbReference>
<dbReference type="PANTHER" id="PTHR11680">
    <property type="entry name" value="SERINE HYDROXYMETHYLTRANSFERASE"/>
    <property type="match status" value="1"/>
</dbReference>
<dbReference type="PANTHER" id="PTHR11680:SF50">
    <property type="entry name" value="SERINE HYDROXYMETHYLTRANSFERASE"/>
    <property type="match status" value="1"/>
</dbReference>
<dbReference type="Pfam" id="PF00464">
    <property type="entry name" value="SHMT"/>
    <property type="match status" value="1"/>
</dbReference>
<dbReference type="PIRSF" id="PIRSF000412">
    <property type="entry name" value="SHMT"/>
    <property type="match status" value="1"/>
</dbReference>
<dbReference type="SUPFAM" id="SSF53383">
    <property type="entry name" value="PLP-dependent transferases"/>
    <property type="match status" value="1"/>
</dbReference>
<dbReference type="PROSITE" id="PS00096">
    <property type="entry name" value="SHMT"/>
    <property type="match status" value="1"/>
</dbReference>
<keyword id="KW-0028">Amino-acid biosynthesis</keyword>
<keyword id="KW-0963">Cytoplasm</keyword>
<keyword id="KW-0554">One-carbon metabolism</keyword>
<keyword id="KW-0663">Pyridoxal phosphate</keyword>
<keyword id="KW-1185">Reference proteome</keyword>
<keyword id="KW-0808">Transferase</keyword>
<sequence>MDYSIKEQDFEVFELIEKELERQNEHLEMIASENFTFPSVMEAMGSILTNKYAEGYPFKRYYGGCEFVDKIEEIAIERAKKLFGANFVNVQPHSGSQANAAVYAAILKPYDKILGMDLSHGGHLTHGAKVSTSGQLYQSFFYGVELNGRIDYDKLALQAQVVKPNVLVCGFSAYTRELDFKRLREIADSVGAYLMGDIAHVAGLVVAGEYPNPFPHCHIVTTTTHKTLRGPRGGAILTNDEELYAKINKAVFPGIQGGPLMHIIAGKAVGFKENLKPEWKIYAKQVKSNIQALAEVLIKRNYELVSGGSDNHLILMSFLNKDFSGKDADLALGNAGITVNKNTIPGEIRSPFITSGIRIGSPALTARGMKEKEFEWIGEKIADILDDINNTNLQEHIKAQVKNFSRDFRIYDRPIF</sequence>
<evidence type="ECO:0000255" key="1">
    <source>
        <dbReference type="HAMAP-Rule" id="MF_00051"/>
    </source>
</evidence>
<gene>
    <name evidence="1" type="primary">glyA</name>
    <name type="ordered locus">HH_1665</name>
</gene>
<feature type="chain" id="PRO_0000113585" description="Serine hydroxymethyltransferase">
    <location>
        <begin position="1"/>
        <end position="416"/>
    </location>
</feature>
<feature type="binding site" evidence="1">
    <location>
        <position position="118"/>
    </location>
    <ligand>
        <name>(6S)-5,6,7,8-tetrahydrofolate</name>
        <dbReference type="ChEBI" id="CHEBI:57453"/>
    </ligand>
</feature>
<feature type="binding site" evidence="1">
    <location>
        <begin position="122"/>
        <end position="124"/>
    </location>
    <ligand>
        <name>(6S)-5,6,7,8-tetrahydrofolate</name>
        <dbReference type="ChEBI" id="CHEBI:57453"/>
    </ligand>
</feature>
<feature type="binding site" evidence="1">
    <location>
        <position position="242"/>
    </location>
    <ligand>
        <name>(6S)-5,6,7,8-tetrahydrofolate</name>
        <dbReference type="ChEBI" id="CHEBI:57453"/>
    </ligand>
</feature>
<feature type="binding site" evidence="1">
    <location>
        <begin position="350"/>
        <end position="352"/>
    </location>
    <ligand>
        <name>(6S)-5,6,7,8-tetrahydrofolate</name>
        <dbReference type="ChEBI" id="CHEBI:57453"/>
    </ligand>
</feature>
<feature type="site" description="Plays an important role in substrate specificity" evidence="1">
    <location>
        <position position="225"/>
    </location>
</feature>
<feature type="modified residue" description="N6-(pyridoxal phosphate)lysine" evidence="1">
    <location>
        <position position="226"/>
    </location>
</feature>
<organism>
    <name type="scientific">Helicobacter hepaticus (strain ATCC 51449 / 3B1)</name>
    <dbReference type="NCBI Taxonomy" id="235279"/>
    <lineage>
        <taxon>Bacteria</taxon>
        <taxon>Pseudomonadati</taxon>
        <taxon>Campylobacterota</taxon>
        <taxon>Epsilonproteobacteria</taxon>
        <taxon>Campylobacterales</taxon>
        <taxon>Helicobacteraceae</taxon>
        <taxon>Helicobacter</taxon>
    </lineage>
</organism>